<keyword id="KW-1185">Reference proteome</keyword>
<keyword id="KW-0677">Repeat</keyword>
<organism>
    <name type="scientific">Escherichia coli (strain K12)</name>
    <dbReference type="NCBI Taxonomy" id="83333"/>
    <lineage>
        <taxon>Bacteria</taxon>
        <taxon>Pseudomonadati</taxon>
        <taxon>Pseudomonadota</taxon>
        <taxon>Gammaproteobacteria</taxon>
        <taxon>Enterobacterales</taxon>
        <taxon>Enterobacteriaceae</taxon>
        <taxon>Escherichia</taxon>
    </lineage>
</organism>
<comment type="function">
    <text>Rhs elements have a nonessential function. They may play an important role in the natural ecology of the cell.</text>
</comment>
<comment type="interaction">
    <interactant intactId="EBI-546818">
        <id>P16918</id>
    </interactant>
    <interactant intactId="EBI-555935">
        <id>P23869</id>
        <label>ppiB</label>
    </interactant>
    <organismsDiffer>false</organismsDiffer>
    <experiments>6</experiments>
</comment>
<comment type="domain">
    <text>Each rhs appears to consist of a highly conserved 141 kDa amino fragment followed by a highly divergent C-terminus.</text>
</comment>
<comment type="similarity">
    <text evidence="2">Belongs to the RHS family.</text>
</comment>
<sequence>MSGKPAARQGDMTQYGGSIVQGSAGVRIGAPTGVACSVCPGGVTSGHPVNPLLGAKVLPGETDIALPGPLPFILSRTYSSYRTKTPAPVGSLGPGWKMPADIRLQLRDNTLILSDNGGRSLYFEHLFPGEDGYSRSESLWLVRGGVAKLDEGHRLAALWQALPEELRLSPHRYLATNSPQGPWWLLGWCERVPEADEVLPAPLPPYRVLTGLVDRFGRTQTFHREAAGEFSGEITGVTDGAGRHFRLVLTTQAQRAEEARQQAISGGTEPSAFPDTLPGYTEYGRDNGIRLSAVWLTHDPEYPENLPAAPLVRYGWTPRGELAAVYDRSNTQVRSFTYDDKYRGRMVAHRHTGRPEICYRYDSDGRVTEQLNPAGLSYTYQYEKDRITITDSLNRREVLHTQGEGGLKRVVKKEHADGSVTQSQFDAVGRLRAQTDAAGRTTEYSPDVVTGLITRITTPDGRASAFYYNHHSQLTSATGPDGLEIRREYDEWGRLIQETAPDGDITRYRYDNPHSDLPCATEDATGSRKTMTWSRYGQLLSFTDCSGYVTRYDHDRFGQVTAVHREEGLSQYRAYDSRGQLIAVKDTQGHETRYEYNAAGDLTTVIAPDGSRNGTQYDAWGKAICTTQGGLTRSMEYDAAGRVIRLTSENGSHTTFRYDVLDRLIQETGFDGRTQRYHHDLTGKLIRSEDEGLVTHWHYDEADRLTHRTVNGETAERWQYDERGWLTDISHISEGHRVTVHYGYDSKGRLASEHLTVHHPQTNELLWQHETRHAYNAQGLANRCIPDSLPAVEWLTYGSGWLSGMKLGDTPLVEYTRDRLHRETLRSFGRYELTTAYTPAGQLQSQHLNSLLSDRDYTWNDNGELIRISSPRQTRSYSYSTTGRLTGVHTTAANLDIRIPYTTDPAGNRLPDPELHPDSALSMWPDNRIARDAHYLYRYDRHGRLTEKTDLIPEGVIRTDDERTHRYHYDSQHRLVHYTRTQYAEPLVESRYLYDPLGRRVAKRVWRRERDLTGWMSLSRKPQVTWYGWDGDRLTTIQNDRTRIQTIYQPGSFTPLIRVETATGELAKTQRRSLADTLQQSGGEDGGSVVFPPVLVQMLDRLESEILADRVSEESRRWLASCGLTVAQMQSQMDPVYTPARKIHLYHCDHRGLPLALISTEGTTAWYAEYDEWGNLLNEENPHQLQQLIRLPGQQYDEESGLYYNRHRYYDPLQGRYITQDPIGLKGGWNFYQYPLNPISNIDPLGLETLKCIKPLHSMGGTGERSGPDIWGNPFYHQYLCVPDGKGDYTCGGQDQRGESKGDGLWGPGKASNDTKEAAGRCDLVETDNSCVENCLKGKFKEVRPRYSVLPDIFTPINLGLFKNCQDWSNDSLETCKMKCSGNNIGRFIRFVFTGVM</sequence>
<protein>
    <recommendedName>
        <fullName>Protein RhsC</fullName>
    </recommendedName>
</protein>
<accession>P16918</accession>
<accession>P77194</accession>
<dbReference type="EMBL" id="L19044">
    <property type="status" value="NOT_ANNOTATED_CDS"/>
    <property type="molecule type" value="Genomic_DNA"/>
</dbReference>
<dbReference type="EMBL" id="U00096">
    <property type="protein sequence ID" value="AAC73794.1"/>
    <property type="molecule type" value="Genomic_DNA"/>
</dbReference>
<dbReference type="EMBL" id="AP009048">
    <property type="protein sequence ID" value="BAA35359.1"/>
    <property type="molecule type" value="Genomic_DNA"/>
</dbReference>
<dbReference type="EMBL" id="L02373">
    <property type="protein sequence ID" value="AAC63072.1"/>
    <property type="molecule type" value="Genomic_DNA"/>
</dbReference>
<dbReference type="PIR" id="C64805">
    <property type="entry name" value="C64805"/>
</dbReference>
<dbReference type="PIR" id="E65145">
    <property type="entry name" value="E65145"/>
</dbReference>
<dbReference type="RefSeq" id="NP_415229.1">
    <property type="nucleotide sequence ID" value="NC_000913.3"/>
</dbReference>
<dbReference type="RefSeq" id="WP_000015200.1">
    <property type="nucleotide sequence ID" value="NZ_LN832404.1"/>
</dbReference>
<dbReference type="SMR" id="P16918"/>
<dbReference type="BioGRID" id="4263131">
    <property type="interactions" value="33"/>
</dbReference>
<dbReference type="BioGRID" id="849683">
    <property type="interactions" value="2"/>
</dbReference>
<dbReference type="DIP" id="DIP-10701N"/>
<dbReference type="FunCoup" id="P16918">
    <property type="interactions" value="263"/>
</dbReference>
<dbReference type="IntAct" id="P16918">
    <property type="interactions" value="33"/>
</dbReference>
<dbReference type="STRING" id="511145.b0700"/>
<dbReference type="PaxDb" id="511145-b0700"/>
<dbReference type="EnsemblBacteria" id="AAC73794">
    <property type="protein sequence ID" value="AAC73794"/>
    <property type="gene ID" value="b0700"/>
</dbReference>
<dbReference type="GeneID" id="945306"/>
<dbReference type="KEGG" id="ecj:JW0689"/>
<dbReference type="KEGG" id="eco:b0700"/>
<dbReference type="KEGG" id="ecoc:C3026_03500"/>
<dbReference type="PATRIC" id="fig|511145.12.peg.731"/>
<dbReference type="EchoBASE" id="EB0841"/>
<dbReference type="eggNOG" id="COG3209">
    <property type="taxonomic scope" value="Bacteria"/>
</dbReference>
<dbReference type="HOGENOM" id="CLU_001218_0_1_6"/>
<dbReference type="InParanoid" id="P16918"/>
<dbReference type="OMA" id="PIGHANN"/>
<dbReference type="OrthoDB" id="6043530at2"/>
<dbReference type="PhylomeDB" id="P16918"/>
<dbReference type="BioCyc" id="EcoCyc:EG10848-MONOMER"/>
<dbReference type="PRO" id="PR:P16918"/>
<dbReference type="Proteomes" id="UP000000625">
    <property type="component" value="Chromosome"/>
</dbReference>
<dbReference type="Gene3D" id="2.180.10.10">
    <property type="entry name" value="RHS repeat-associated core"/>
    <property type="match status" value="2"/>
</dbReference>
<dbReference type="InterPro" id="IPR045351">
    <property type="entry name" value="DUF6531"/>
</dbReference>
<dbReference type="InterPro" id="IPR001826">
    <property type="entry name" value="RHS"/>
</dbReference>
<dbReference type="InterPro" id="IPR022385">
    <property type="entry name" value="Rhs_assc_core"/>
</dbReference>
<dbReference type="InterPro" id="IPR053422">
    <property type="entry name" value="RHS_domain"/>
</dbReference>
<dbReference type="InterPro" id="IPR031325">
    <property type="entry name" value="RHS_repeat"/>
</dbReference>
<dbReference type="InterPro" id="IPR050708">
    <property type="entry name" value="T6SS_VgrG/RHS"/>
</dbReference>
<dbReference type="InterPro" id="IPR006530">
    <property type="entry name" value="YD"/>
</dbReference>
<dbReference type="NCBIfam" id="TIGR03696">
    <property type="entry name" value="Rhs_assc_core"/>
    <property type="match status" value="1"/>
</dbReference>
<dbReference type="NCBIfam" id="NF041261">
    <property type="entry name" value="RHS_core"/>
    <property type="match status" value="1"/>
</dbReference>
<dbReference type="NCBIfam" id="TIGR01643">
    <property type="entry name" value="YD_repeat_2x"/>
    <property type="match status" value="6"/>
</dbReference>
<dbReference type="PANTHER" id="PTHR32305">
    <property type="match status" value="1"/>
</dbReference>
<dbReference type="PANTHER" id="PTHR32305:SF15">
    <property type="entry name" value="PROTEIN RHSA-RELATED"/>
    <property type="match status" value="1"/>
</dbReference>
<dbReference type="Pfam" id="PF20148">
    <property type="entry name" value="DUF6531"/>
    <property type="match status" value="1"/>
</dbReference>
<dbReference type="Pfam" id="PF03527">
    <property type="entry name" value="RHS"/>
    <property type="match status" value="1"/>
</dbReference>
<dbReference type="Pfam" id="PF05593">
    <property type="entry name" value="RHS_repeat"/>
    <property type="match status" value="5"/>
</dbReference>
<dbReference type="PRINTS" id="PR00394">
    <property type="entry name" value="RHSPROTEIN"/>
</dbReference>
<evidence type="ECO:0000256" key="1">
    <source>
        <dbReference type="SAM" id="MobiDB-lite"/>
    </source>
</evidence>
<evidence type="ECO:0000305" key="2"/>
<evidence type="ECO:0000305" key="3">
    <source>
    </source>
</evidence>
<feature type="chain" id="PRO_0000022227" description="Protein RhsC">
    <location>
        <begin position="1"/>
        <end position="1397"/>
    </location>
</feature>
<feature type="repeat" description="1" evidence="3">
    <location>
        <begin position="330"/>
        <end position="352"/>
    </location>
</feature>
<feature type="repeat" description="2" evidence="3">
    <location>
        <begin position="353"/>
        <end position="374"/>
    </location>
</feature>
<feature type="repeat" description="3" evidence="3">
    <location>
        <begin position="375"/>
        <end position="417"/>
    </location>
</feature>
<feature type="repeat" description="4" evidence="3">
    <location>
        <begin position="418"/>
        <end position="438"/>
    </location>
</feature>
<feature type="repeat" description="5" evidence="3">
    <location>
        <begin position="439"/>
        <end position="460"/>
    </location>
</feature>
<feature type="repeat" description="6" evidence="3">
    <location>
        <begin position="461"/>
        <end position="481"/>
    </location>
</feature>
<feature type="repeat" description="7" evidence="3">
    <location>
        <begin position="482"/>
        <end position="502"/>
    </location>
</feature>
<feature type="repeat" description="8" evidence="3">
    <location>
        <begin position="503"/>
        <end position="525"/>
    </location>
</feature>
<feature type="repeat" description="9" evidence="3">
    <location>
        <begin position="526"/>
        <end position="546"/>
    </location>
</feature>
<feature type="repeat" description="10" evidence="3">
    <location>
        <begin position="547"/>
        <end position="567"/>
    </location>
</feature>
<feature type="repeat" description="11" evidence="3">
    <location>
        <begin position="568"/>
        <end position="588"/>
    </location>
</feature>
<feature type="repeat" description="12" evidence="3">
    <location>
        <begin position="589"/>
        <end position="609"/>
    </location>
</feature>
<feature type="repeat" description="13" evidence="3">
    <location>
        <begin position="610"/>
        <end position="629"/>
    </location>
</feature>
<feature type="repeat" description="14" evidence="3">
    <location>
        <begin position="630"/>
        <end position="650"/>
    </location>
</feature>
<feature type="repeat" description="15" evidence="3">
    <location>
        <begin position="651"/>
        <end position="671"/>
    </location>
</feature>
<feature type="repeat" description="16" evidence="3">
    <location>
        <begin position="672"/>
        <end position="691"/>
    </location>
</feature>
<feature type="repeat" description="17" evidence="3">
    <location>
        <begin position="692"/>
        <end position="711"/>
    </location>
</feature>
<feature type="repeat" description="18" evidence="3">
    <location>
        <begin position="712"/>
        <end position="734"/>
    </location>
</feature>
<feature type="repeat" description="19" evidence="3">
    <location>
        <begin position="735"/>
        <end position="758"/>
    </location>
</feature>
<feature type="repeat" description="20" evidence="3">
    <location>
        <begin position="808"/>
        <end position="828"/>
    </location>
</feature>
<feature type="repeat" description="21" evidence="3">
    <location>
        <begin position="829"/>
        <end position="850"/>
    </location>
</feature>
<feature type="repeat" description="22" evidence="3">
    <location>
        <begin position="851"/>
        <end position="871"/>
    </location>
</feature>
<feature type="repeat" description="23" evidence="3">
    <location>
        <begin position="872"/>
        <end position="894"/>
    </location>
</feature>
<feature type="repeat" description="24" evidence="3">
    <location>
        <begin position="895"/>
        <end position="930"/>
    </location>
</feature>
<feature type="repeat" description="25" evidence="3">
    <location>
        <begin position="931"/>
        <end position="959"/>
    </location>
</feature>
<feature type="repeat" description="26" evidence="3">
    <location>
        <begin position="960"/>
        <end position="984"/>
    </location>
</feature>
<feature type="repeat" description="27" evidence="3">
    <location>
        <begin position="985"/>
        <end position="1019"/>
    </location>
</feature>
<feature type="repeat" description="28" evidence="3">
    <location>
        <begin position="1162"/>
        <end position="1186"/>
    </location>
</feature>
<feature type="region of interest" description="28 X approximate tandem repeats" evidence="3">
    <location>
        <begin position="330"/>
        <end position="1186"/>
    </location>
</feature>
<feature type="region of interest" description="Disordered" evidence="1">
    <location>
        <begin position="1292"/>
        <end position="1312"/>
    </location>
</feature>
<proteinExistence type="evidence at protein level"/>
<name>RHSC_ECOLI</name>
<gene>
    <name type="primary">rhsC</name>
    <name type="ordered locus">b0700</name>
    <name type="ordered locus">JW0689</name>
</gene>
<reference key="1">
    <citation type="journal article" date="1993" name="J. Bacteriol.">
        <title>Rhs elements of Escherichia coli K-12: complex composites of shared and unique components that have different evolutionary histories.</title>
        <authorList>
            <person name="Zhao S."/>
            <person name="Sandt C.H."/>
            <person name="Feulner G."/>
            <person name="Vlazny D.A."/>
            <person name="Gray J.A."/>
            <person name="Hill C.W."/>
        </authorList>
    </citation>
    <scope>NUCLEOTIDE SEQUENCE [GENOMIC DNA]</scope>
    <source>
        <strain>K12</strain>
    </source>
</reference>
<reference key="2">
    <citation type="journal article" date="1996" name="DNA Res.">
        <title>A 718-kb DNA sequence of the Escherichia coli K-12 genome corresponding to the 12.7-28.0 min region on the linkage map.</title>
        <authorList>
            <person name="Oshima T."/>
            <person name="Aiba H."/>
            <person name="Baba T."/>
            <person name="Fujita K."/>
            <person name="Hayashi K."/>
            <person name="Honjo A."/>
            <person name="Ikemoto K."/>
            <person name="Inada T."/>
            <person name="Itoh T."/>
            <person name="Kajihara M."/>
            <person name="Kanai K."/>
            <person name="Kashimoto K."/>
            <person name="Kimura S."/>
            <person name="Kitagawa M."/>
            <person name="Makino K."/>
            <person name="Masuda S."/>
            <person name="Miki T."/>
            <person name="Mizobuchi K."/>
            <person name="Mori H."/>
            <person name="Motomura K."/>
            <person name="Nakamura Y."/>
            <person name="Nashimoto H."/>
            <person name="Nishio Y."/>
            <person name="Saito N."/>
            <person name="Sampei G."/>
            <person name="Seki Y."/>
            <person name="Tagami H."/>
            <person name="Takemoto K."/>
            <person name="Wada C."/>
            <person name="Yamamoto Y."/>
            <person name="Yano M."/>
            <person name="Horiuchi T."/>
        </authorList>
    </citation>
    <scope>NUCLEOTIDE SEQUENCE [LARGE SCALE GENOMIC DNA]</scope>
    <source>
        <strain>K12 / W3110 / ATCC 27325 / DSM 5911</strain>
    </source>
</reference>
<reference key="3">
    <citation type="journal article" date="1997" name="Science">
        <title>The complete genome sequence of Escherichia coli K-12.</title>
        <authorList>
            <person name="Blattner F.R."/>
            <person name="Plunkett G. III"/>
            <person name="Bloch C.A."/>
            <person name="Perna N.T."/>
            <person name="Burland V."/>
            <person name="Riley M."/>
            <person name="Collado-Vides J."/>
            <person name="Glasner J.D."/>
            <person name="Rode C.K."/>
            <person name="Mayhew G.F."/>
            <person name="Gregor J."/>
            <person name="Davis N.W."/>
            <person name="Kirkpatrick H.A."/>
            <person name="Goeden M.A."/>
            <person name="Rose D.J."/>
            <person name="Mau B."/>
            <person name="Shao Y."/>
        </authorList>
    </citation>
    <scope>NUCLEOTIDE SEQUENCE [LARGE SCALE GENOMIC DNA]</scope>
    <source>
        <strain>K12 / MG1655 / ATCC 47076</strain>
    </source>
</reference>
<reference key="4">
    <citation type="journal article" date="2006" name="Mol. Syst. Biol.">
        <title>Highly accurate genome sequences of Escherichia coli K-12 strains MG1655 and W3110.</title>
        <authorList>
            <person name="Hayashi K."/>
            <person name="Morooka N."/>
            <person name="Yamamoto Y."/>
            <person name="Fujita K."/>
            <person name="Isono K."/>
            <person name="Choi S."/>
            <person name="Ohtsubo E."/>
            <person name="Baba T."/>
            <person name="Wanner B.L."/>
            <person name="Mori H."/>
            <person name="Horiuchi T."/>
        </authorList>
    </citation>
    <scope>NUCLEOTIDE SEQUENCE [LARGE SCALE GENOMIC DNA]</scope>
    <source>
        <strain>K12 / W3110 / ATCC 27325 / DSM 5911</strain>
    </source>
</reference>
<reference key="5">
    <citation type="journal article" date="1989" name="J. Bacteriol.">
        <title>rhs gene family of Escherichia coli K-12.</title>
        <authorList>
            <person name="Sadosky A.B."/>
            <person name="Davidson A."/>
            <person name="Lin R.J."/>
            <person name="Hill C.W."/>
        </authorList>
    </citation>
    <scope>NUCLEOTIDE SEQUENCE [GENOMIC DNA] OF 1-100</scope>
    <source>
        <strain>K12</strain>
    </source>
</reference>
<reference key="6">
    <citation type="journal article" date="1990" name="J. Bacteriol.">
        <title>Structure of the rhsA locus from Escherichia coli K-12 and comparison of rhsA with other members of the rhs multigene family.</title>
        <authorList>
            <person name="Feulner G."/>
            <person name="Gray J.A."/>
            <person name="Kirschman J.A."/>
            <person name="Lehner A.F."/>
            <person name="Sadosky A.B."/>
            <person name="Vlazny D.A."/>
            <person name="Zhang J."/>
            <person name="Zhao S."/>
            <person name="Hill C.W."/>
        </authorList>
    </citation>
    <scope>NUCLEOTIDE SEQUENCE [GENOMIC DNA] OF 1221-1397</scope>
    <source>
        <strain>K12</strain>
    </source>
</reference>
<reference key="7">
    <citation type="journal article" date="1994" name="Mol. Microbiol.">
        <title>Rhs elements of Escherichia coli: a family of genetic composites each encoding a large mosaic protein.</title>
        <authorList>
            <person name="Hill C.W."/>
            <person name="Sandt C.H."/>
            <person name="Vlazny D.A."/>
        </authorList>
    </citation>
    <scope>REVIEW</scope>
</reference>